<dbReference type="EC" id="6.1.1.20"/>
<dbReference type="EMBL" id="ACOL01000168">
    <property type="protein sequence ID" value="EEQ81893.1"/>
    <property type="molecule type" value="Genomic_DNA"/>
</dbReference>
<dbReference type="RefSeq" id="XP_002995564.1">
    <property type="nucleotide sequence ID" value="XM_002995518.1"/>
</dbReference>
<dbReference type="SMR" id="C4VA52"/>
<dbReference type="FunCoup" id="C4VA52">
    <property type="interactions" value="252"/>
</dbReference>
<dbReference type="STRING" id="578460.C4VA52"/>
<dbReference type="KEGG" id="nce:NCER_101490"/>
<dbReference type="VEuPathDB" id="MicrosporidiaDB:NCER_101490"/>
<dbReference type="HOGENOM" id="CLU_020279_2_0_1"/>
<dbReference type="InParanoid" id="C4VA52"/>
<dbReference type="OMA" id="FPGRCAN"/>
<dbReference type="OrthoDB" id="9115at6029"/>
<dbReference type="Proteomes" id="UP000009082">
    <property type="component" value="Unassembled WGS sequence"/>
</dbReference>
<dbReference type="GO" id="GO:0009328">
    <property type="term" value="C:phenylalanine-tRNA ligase complex"/>
    <property type="evidence" value="ECO:0007669"/>
    <property type="project" value="TreeGrafter"/>
</dbReference>
<dbReference type="GO" id="GO:0005524">
    <property type="term" value="F:ATP binding"/>
    <property type="evidence" value="ECO:0007669"/>
    <property type="project" value="UniProtKB-KW"/>
</dbReference>
<dbReference type="GO" id="GO:0000287">
    <property type="term" value="F:magnesium ion binding"/>
    <property type="evidence" value="ECO:0000250"/>
    <property type="project" value="UniProtKB"/>
</dbReference>
<dbReference type="GO" id="GO:0004826">
    <property type="term" value="F:phenylalanine-tRNA ligase activity"/>
    <property type="evidence" value="ECO:0007669"/>
    <property type="project" value="UniProtKB-EC"/>
</dbReference>
<dbReference type="GO" id="GO:0003723">
    <property type="term" value="F:RNA binding"/>
    <property type="evidence" value="ECO:0007669"/>
    <property type="project" value="InterPro"/>
</dbReference>
<dbReference type="GO" id="GO:0006432">
    <property type="term" value="P:phenylalanyl-tRNA aminoacylation"/>
    <property type="evidence" value="ECO:0007669"/>
    <property type="project" value="InterPro"/>
</dbReference>
<dbReference type="Gene3D" id="3.30.56.10">
    <property type="match status" value="2"/>
</dbReference>
<dbReference type="Gene3D" id="3.30.930.10">
    <property type="entry name" value="Bira Bifunctional Protein, Domain 2"/>
    <property type="match status" value="1"/>
</dbReference>
<dbReference type="Gene3D" id="3.50.40.10">
    <property type="entry name" value="Phenylalanyl-trna Synthetase, Chain B, domain 3"/>
    <property type="match status" value="1"/>
</dbReference>
<dbReference type="InterPro" id="IPR045864">
    <property type="entry name" value="aa-tRNA-synth_II/BPL/LPL"/>
</dbReference>
<dbReference type="InterPro" id="IPR005146">
    <property type="entry name" value="B3/B4_tRNA-bd"/>
</dbReference>
<dbReference type="InterPro" id="IPR009061">
    <property type="entry name" value="DNA-bd_dom_put_sf"/>
</dbReference>
<dbReference type="InterPro" id="IPR045060">
    <property type="entry name" value="Phe-tRNA-ligase_IIc_bsu"/>
</dbReference>
<dbReference type="InterPro" id="IPR004531">
    <property type="entry name" value="Phe-tRNA-synth_IIc_bsu_arc_euk"/>
</dbReference>
<dbReference type="InterPro" id="IPR020825">
    <property type="entry name" value="Phe-tRNA_synthase-like_B3/B4"/>
</dbReference>
<dbReference type="InterPro" id="IPR041616">
    <property type="entry name" value="PheRS_beta_core"/>
</dbReference>
<dbReference type="InterPro" id="IPR040659">
    <property type="entry name" value="PhetRS_B1"/>
</dbReference>
<dbReference type="InterPro" id="IPR005147">
    <property type="entry name" value="tRNA_synthase_B5-dom"/>
</dbReference>
<dbReference type="NCBIfam" id="TIGR00471">
    <property type="entry name" value="pheT_arch"/>
    <property type="match status" value="1"/>
</dbReference>
<dbReference type="PANTHER" id="PTHR10947:SF0">
    <property type="entry name" value="PHENYLALANINE--TRNA LIGASE BETA SUBUNIT"/>
    <property type="match status" value="1"/>
</dbReference>
<dbReference type="PANTHER" id="PTHR10947">
    <property type="entry name" value="PHENYLALANYL-TRNA SYNTHETASE BETA CHAIN AND LEUCINE-RICH REPEAT-CONTAINING PROTEIN 47"/>
    <property type="match status" value="1"/>
</dbReference>
<dbReference type="Pfam" id="PF03483">
    <property type="entry name" value="B3_4"/>
    <property type="match status" value="1"/>
</dbReference>
<dbReference type="Pfam" id="PF03484">
    <property type="entry name" value="B5"/>
    <property type="match status" value="1"/>
</dbReference>
<dbReference type="Pfam" id="PF18262">
    <property type="entry name" value="PhetRS_B1"/>
    <property type="match status" value="1"/>
</dbReference>
<dbReference type="Pfam" id="PF17759">
    <property type="entry name" value="tRNA_synthFbeta"/>
    <property type="match status" value="1"/>
</dbReference>
<dbReference type="SMART" id="SM00873">
    <property type="entry name" value="B3_4"/>
    <property type="match status" value="1"/>
</dbReference>
<dbReference type="SMART" id="SM00874">
    <property type="entry name" value="B5"/>
    <property type="match status" value="1"/>
</dbReference>
<dbReference type="SUPFAM" id="SSF55681">
    <property type="entry name" value="Class II aaRS and biotin synthetases"/>
    <property type="match status" value="1"/>
</dbReference>
<dbReference type="SUPFAM" id="SSF56037">
    <property type="entry name" value="PheT/TilS domain"/>
    <property type="match status" value="1"/>
</dbReference>
<dbReference type="SUPFAM" id="SSF46955">
    <property type="entry name" value="Putative DNA-binding domain"/>
    <property type="match status" value="2"/>
</dbReference>
<dbReference type="PROSITE" id="PS51483">
    <property type="entry name" value="B5"/>
    <property type="match status" value="1"/>
</dbReference>
<gene>
    <name type="ORF">NCER_101490</name>
</gene>
<protein>
    <recommendedName>
        <fullName>Probable phenylalanine--tRNA ligase beta subunit</fullName>
        <ecNumber>6.1.1.20</ecNumber>
    </recommendedName>
    <alternativeName>
        <fullName>Phenylalanyl-tRNA synthetase beta subunit</fullName>
        <shortName>PheRS</shortName>
    </alternativeName>
</protein>
<evidence type="ECO:0000250" key="1"/>
<evidence type="ECO:0000250" key="2">
    <source>
        <dbReference type="UniProtKB" id="A5K464"/>
    </source>
</evidence>
<evidence type="ECO:0000255" key="3">
    <source>
        <dbReference type="PROSITE-ProRule" id="PRU00816"/>
    </source>
</evidence>
<evidence type="ECO:0000305" key="4"/>
<proteinExistence type="inferred from homology"/>
<accession>C4VA52</accession>
<keyword id="KW-0030">Aminoacyl-tRNA synthetase</keyword>
<keyword id="KW-0067">ATP-binding</keyword>
<keyword id="KW-0963">Cytoplasm</keyword>
<keyword id="KW-0436">Ligase</keyword>
<keyword id="KW-0460">Magnesium</keyword>
<keyword id="KW-0479">Metal-binding</keyword>
<keyword id="KW-0547">Nucleotide-binding</keyword>
<keyword id="KW-0648">Protein biosynthesis</keyword>
<keyword id="KW-1185">Reference proteome</keyword>
<sequence>MPTISVKKREIEKLLGKSYDSETFSDILFNYGLEIDECIEESDDITYKIEIPANRYDLLCAEGLNYALQSYLFGKVFEDINLQSSEYTIFKQHFGNRSCVAAAIIKNYKFDKYSYDSFISYQEKLCGNLGRNRSLVSMGTHDLDTISWPVTYKSIKKTELKFAPLNCTKEINDLEMHFKDDKNIGKYLQYVDNDNYIVFMDAKGHILSVPPVINSNRTKISVNTTNILVEVTGTNTYKVNTCLKMILSAFRTDNMCQVNIISDKQEILEIKDKSYLLSIDEVYKELNINISVIDLSDLLIKMMYKTNIIDDKHLNVTVPSVRQDVLHKADLIEDIAICYGFNNINMVMPDINTIGSENRLNKFSDKLRLEMCMLGFTEVYTMVLVSKSDNIFGDNSAVVSNYKSLECEAVRSSLYPGLMKAVSSNLHCKIPIKIFEVGDVVFLDSESDVGARNRRYLSCLYVGNKSHLEDVQGPMTVILEKCGIKDYKFERMDDEKKYLKNQSA</sequence>
<reference key="1">
    <citation type="journal article" date="2009" name="PLoS Pathog.">
        <title>Genomic analyses of the microsporidian Nosema ceranae, an emergent pathogen of honey bees.</title>
        <authorList>
            <person name="Cornman R.S."/>
            <person name="Chen Y.P."/>
            <person name="Schatz M.C."/>
            <person name="Street C."/>
            <person name="Zhao Y."/>
            <person name="Desany B."/>
            <person name="Egholm M."/>
            <person name="Hutchison S."/>
            <person name="Pettis J.S."/>
            <person name="Lipkin W.I."/>
            <person name="Evans J.D."/>
        </authorList>
    </citation>
    <scope>NUCLEOTIDE SEQUENCE [LARGE SCALE GENOMIC DNA]</scope>
    <source>
        <strain>BRL01</strain>
    </source>
</reference>
<feature type="chain" id="PRO_0000388412" description="Probable phenylalanine--tRNA ligase beta subunit">
    <location>
        <begin position="1"/>
        <end position="504"/>
    </location>
</feature>
<feature type="domain" description="B5" evidence="3">
    <location>
        <begin position="270"/>
        <end position="346"/>
    </location>
</feature>
<feature type="binding site" evidence="3">
    <location>
        <position position="324"/>
    </location>
    <ligand>
        <name>Mg(2+)</name>
        <dbReference type="ChEBI" id="CHEBI:18420"/>
        <note>shared with alpha subunit</note>
    </ligand>
</feature>
<feature type="binding site" evidence="3">
    <location>
        <position position="330"/>
    </location>
    <ligand>
        <name>Mg(2+)</name>
        <dbReference type="ChEBI" id="CHEBI:18420"/>
        <note>shared with alpha subunit</note>
    </ligand>
</feature>
<feature type="binding site" evidence="3">
    <location>
        <position position="333"/>
    </location>
    <ligand>
        <name>Mg(2+)</name>
        <dbReference type="ChEBI" id="CHEBI:18420"/>
        <note>shared with alpha subunit</note>
    </ligand>
</feature>
<feature type="binding site" evidence="3">
    <location>
        <position position="334"/>
    </location>
    <ligand>
        <name>Mg(2+)</name>
        <dbReference type="ChEBI" id="CHEBI:18420"/>
        <note>shared with alpha subunit</note>
    </ligand>
</feature>
<name>SYFB_VAIC1</name>
<comment type="catalytic activity">
    <reaction>
        <text>tRNA(Phe) + L-phenylalanine + ATP = L-phenylalanyl-tRNA(Phe) + AMP + diphosphate + H(+)</text>
        <dbReference type="Rhea" id="RHEA:19413"/>
        <dbReference type="Rhea" id="RHEA-COMP:9668"/>
        <dbReference type="Rhea" id="RHEA-COMP:9699"/>
        <dbReference type="ChEBI" id="CHEBI:15378"/>
        <dbReference type="ChEBI" id="CHEBI:30616"/>
        <dbReference type="ChEBI" id="CHEBI:33019"/>
        <dbReference type="ChEBI" id="CHEBI:58095"/>
        <dbReference type="ChEBI" id="CHEBI:78442"/>
        <dbReference type="ChEBI" id="CHEBI:78531"/>
        <dbReference type="ChEBI" id="CHEBI:456215"/>
        <dbReference type="EC" id="6.1.1.20"/>
    </reaction>
</comment>
<comment type="cofactor">
    <cofactor evidence="2">
        <name>Mg(2+)</name>
        <dbReference type="ChEBI" id="CHEBI:18420"/>
    </cofactor>
</comment>
<comment type="subunit">
    <text evidence="1">Tetramer of two alpha and two beta subunits.</text>
</comment>
<comment type="subcellular location">
    <subcellularLocation>
        <location evidence="1">Cytoplasm</location>
    </subcellularLocation>
</comment>
<comment type="similarity">
    <text evidence="4">Belongs to the phenylalanyl-tRNA synthetase beta subunit family. Type 2 subfamily.</text>
</comment>
<organism>
    <name type="scientific">Vairimorpha ceranae (strain BRL01)</name>
    <name type="common">Microsporidian parasite</name>
    <name type="synonym">Nosema ceranae</name>
    <dbReference type="NCBI Taxonomy" id="578460"/>
    <lineage>
        <taxon>Eukaryota</taxon>
        <taxon>Fungi</taxon>
        <taxon>Fungi incertae sedis</taxon>
        <taxon>Microsporidia</taxon>
        <taxon>Nosematidae</taxon>
        <taxon>Vairimorpha</taxon>
    </lineage>
</organism>